<dbReference type="EC" id="6.3.5.7" evidence="1"/>
<dbReference type="EMBL" id="CP000232">
    <property type="protein sequence ID" value="ABC20305.1"/>
    <property type="molecule type" value="Genomic_DNA"/>
</dbReference>
<dbReference type="RefSeq" id="YP_430848.1">
    <property type="nucleotide sequence ID" value="NC_007644.1"/>
</dbReference>
<dbReference type="SMR" id="Q2RGY4"/>
<dbReference type="STRING" id="264732.Moth_2009"/>
<dbReference type="EnsemblBacteria" id="ABC20305">
    <property type="protein sequence ID" value="ABC20305"/>
    <property type="gene ID" value="Moth_2009"/>
</dbReference>
<dbReference type="KEGG" id="mta:Moth_2009"/>
<dbReference type="PATRIC" id="fig|264732.11.peg.2178"/>
<dbReference type="eggNOG" id="COG0154">
    <property type="taxonomic scope" value="Bacteria"/>
</dbReference>
<dbReference type="HOGENOM" id="CLU_009600_0_3_9"/>
<dbReference type="OrthoDB" id="9811471at2"/>
<dbReference type="GO" id="GO:0030956">
    <property type="term" value="C:glutamyl-tRNA(Gln) amidotransferase complex"/>
    <property type="evidence" value="ECO:0007669"/>
    <property type="project" value="InterPro"/>
</dbReference>
<dbReference type="GO" id="GO:0005524">
    <property type="term" value="F:ATP binding"/>
    <property type="evidence" value="ECO:0007669"/>
    <property type="project" value="UniProtKB-KW"/>
</dbReference>
<dbReference type="GO" id="GO:0050567">
    <property type="term" value="F:glutaminyl-tRNA synthase (glutamine-hydrolyzing) activity"/>
    <property type="evidence" value="ECO:0007669"/>
    <property type="project" value="UniProtKB-UniRule"/>
</dbReference>
<dbReference type="GO" id="GO:0006412">
    <property type="term" value="P:translation"/>
    <property type="evidence" value="ECO:0007669"/>
    <property type="project" value="UniProtKB-UniRule"/>
</dbReference>
<dbReference type="Gene3D" id="3.90.1300.10">
    <property type="entry name" value="Amidase signature (AS) domain"/>
    <property type="match status" value="1"/>
</dbReference>
<dbReference type="HAMAP" id="MF_00120">
    <property type="entry name" value="GatA"/>
    <property type="match status" value="1"/>
</dbReference>
<dbReference type="InterPro" id="IPR000120">
    <property type="entry name" value="Amidase"/>
</dbReference>
<dbReference type="InterPro" id="IPR023631">
    <property type="entry name" value="Amidase_dom"/>
</dbReference>
<dbReference type="InterPro" id="IPR036928">
    <property type="entry name" value="AS_sf"/>
</dbReference>
<dbReference type="InterPro" id="IPR004412">
    <property type="entry name" value="GatA"/>
</dbReference>
<dbReference type="NCBIfam" id="TIGR00132">
    <property type="entry name" value="gatA"/>
    <property type="match status" value="1"/>
</dbReference>
<dbReference type="PANTHER" id="PTHR11895:SF151">
    <property type="entry name" value="GLUTAMYL-TRNA(GLN) AMIDOTRANSFERASE SUBUNIT A"/>
    <property type="match status" value="1"/>
</dbReference>
<dbReference type="PANTHER" id="PTHR11895">
    <property type="entry name" value="TRANSAMIDASE"/>
    <property type="match status" value="1"/>
</dbReference>
<dbReference type="Pfam" id="PF01425">
    <property type="entry name" value="Amidase"/>
    <property type="match status" value="1"/>
</dbReference>
<dbReference type="PIRSF" id="PIRSF001221">
    <property type="entry name" value="Amidase_fungi"/>
    <property type="match status" value="1"/>
</dbReference>
<dbReference type="SUPFAM" id="SSF75304">
    <property type="entry name" value="Amidase signature (AS) enzymes"/>
    <property type="match status" value="1"/>
</dbReference>
<protein>
    <recommendedName>
        <fullName evidence="1">Glutamyl-tRNA(Gln) amidotransferase subunit A</fullName>
        <shortName evidence="1">Glu-ADT subunit A</shortName>
        <ecNumber evidence="1">6.3.5.7</ecNumber>
    </recommendedName>
</protein>
<organism>
    <name type="scientific">Moorella thermoacetica (strain ATCC 39073 / JCM 9320)</name>
    <dbReference type="NCBI Taxonomy" id="264732"/>
    <lineage>
        <taxon>Bacteria</taxon>
        <taxon>Bacillati</taxon>
        <taxon>Bacillota</taxon>
        <taxon>Clostridia</taxon>
        <taxon>Moorellales</taxon>
        <taxon>Moorellaceae</taxon>
        <taxon>Moorella</taxon>
    </lineage>
</organism>
<comment type="function">
    <text evidence="1">Allows the formation of correctly charged Gln-tRNA(Gln) through the transamidation of misacylated Glu-tRNA(Gln) in organisms which lack glutaminyl-tRNA synthetase. The reaction takes place in the presence of glutamine and ATP through an activated gamma-phospho-Glu-tRNA(Gln).</text>
</comment>
<comment type="catalytic activity">
    <reaction evidence="1">
        <text>L-glutamyl-tRNA(Gln) + L-glutamine + ATP + H2O = L-glutaminyl-tRNA(Gln) + L-glutamate + ADP + phosphate + H(+)</text>
        <dbReference type="Rhea" id="RHEA:17521"/>
        <dbReference type="Rhea" id="RHEA-COMP:9681"/>
        <dbReference type="Rhea" id="RHEA-COMP:9684"/>
        <dbReference type="ChEBI" id="CHEBI:15377"/>
        <dbReference type="ChEBI" id="CHEBI:15378"/>
        <dbReference type="ChEBI" id="CHEBI:29985"/>
        <dbReference type="ChEBI" id="CHEBI:30616"/>
        <dbReference type="ChEBI" id="CHEBI:43474"/>
        <dbReference type="ChEBI" id="CHEBI:58359"/>
        <dbReference type="ChEBI" id="CHEBI:78520"/>
        <dbReference type="ChEBI" id="CHEBI:78521"/>
        <dbReference type="ChEBI" id="CHEBI:456216"/>
        <dbReference type="EC" id="6.3.5.7"/>
    </reaction>
</comment>
<comment type="subunit">
    <text evidence="1">Heterotrimer of A, B and C subunits.</text>
</comment>
<comment type="similarity">
    <text evidence="1">Belongs to the amidase family. GatA subfamily.</text>
</comment>
<sequence length="487" mass="52551">MELYYLTAHELSDLLNRKEISSEEATAAIIDRIEAVDGRVQAYLTRTAEQALEEARAVDAARARGETLGPLAGVPMALKDNLCTEGVRTTCSSRMLADWVPPYDATVVRRLKEAGAVMLGKLNMDEFAMGSSTENSSFFPTRNPWDLERVPGGSSGGAVAAVAAGEAYFALGSDTGGSIRQPASFCGVVGMKPTYGRVSRYGLVAFASSLDQIGPITRDVTDCALVLEAIAGHDPLDSTSADLPVPDYRSALKPEVKGLKIGVPREYFGAGMEPEVAAIVRRAIAKLEELGAVCEETSLPHTEYALPAYYLVAPAEASSNLARYDGVSYGLRVPGKDIIEMYMNTRSQGFGPEVKRRIMLGTYALSSGYYDAYYLKALKVRTLIRRDFETAFEKYDLLATPTSPTVAFRLGEKAGDPLAMYLSDLCTIPINMAGLPALSLPCGFSQGLPVGLQLIGRPFAEATLLQAAYAFEQSTEYHRRRPELGVA</sequence>
<gene>
    <name evidence="1" type="primary">gatA</name>
    <name type="ordered locus">Moth_2009</name>
</gene>
<reference key="1">
    <citation type="journal article" date="2008" name="Environ. Microbiol.">
        <title>The complete genome sequence of Moorella thermoacetica (f. Clostridium thermoaceticum).</title>
        <authorList>
            <person name="Pierce E."/>
            <person name="Xie G."/>
            <person name="Barabote R.D."/>
            <person name="Saunders E."/>
            <person name="Han C.S."/>
            <person name="Detter J.C."/>
            <person name="Richardson P."/>
            <person name="Brettin T.S."/>
            <person name="Das A."/>
            <person name="Ljungdahl L.G."/>
            <person name="Ragsdale S.W."/>
        </authorList>
    </citation>
    <scope>NUCLEOTIDE SEQUENCE [LARGE SCALE GENOMIC DNA]</scope>
    <source>
        <strain>ATCC 39073 / JCM 9320</strain>
    </source>
</reference>
<proteinExistence type="inferred from homology"/>
<keyword id="KW-0067">ATP-binding</keyword>
<keyword id="KW-0436">Ligase</keyword>
<keyword id="KW-0547">Nucleotide-binding</keyword>
<keyword id="KW-0648">Protein biosynthesis</keyword>
<evidence type="ECO:0000255" key="1">
    <source>
        <dbReference type="HAMAP-Rule" id="MF_00120"/>
    </source>
</evidence>
<feature type="chain" id="PRO_0000241118" description="Glutamyl-tRNA(Gln) amidotransferase subunit A">
    <location>
        <begin position="1"/>
        <end position="487"/>
    </location>
</feature>
<feature type="active site" description="Charge relay system" evidence="1">
    <location>
        <position position="79"/>
    </location>
</feature>
<feature type="active site" description="Charge relay system" evidence="1">
    <location>
        <position position="154"/>
    </location>
</feature>
<feature type="active site" description="Acyl-ester intermediate" evidence="1">
    <location>
        <position position="178"/>
    </location>
</feature>
<name>GATA_MOOTA</name>
<accession>Q2RGY4</accession>